<sequence>MPDVDRFGRLPWLWITVLVFVLDQVSKAFFQAELSMYQQIVVIPDLFSWTLAYNTGAAFSFLADSSGWQRWLFALIAIVVSASLVVWLKRLKKGETWLAIALALVLGGALGNLYDRMVLGHVVDFILVHWQNRWYFPAFNLADSAITVGAVMLALDMFRSKKSGEAAHG</sequence>
<evidence type="ECO:0000255" key="1">
    <source>
        <dbReference type="HAMAP-Rule" id="MF_00161"/>
    </source>
</evidence>
<evidence type="ECO:0000269" key="2">
    <source>
    </source>
</evidence>
<evidence type="ECO:0000269" key="3">
    <source>
    </source>
</evidence>
<evidence type="ECO:0000269" key="4">
    <source>
    </source>
</evidence>
<evidence type="ECO:0000303" key="5">
    <source>
    </source>
</evidence>
<evidence type="ECO:0000303" key="6">
    <source>
    </source>
</evidence>
<evidence type="ECO:0000305" key="7">
    <source>
    </source>
</evidence>
<evidence type="ECO:0007744" key="8">
    <source>
        <dbReference type="PDB" id="5DIR"/>
    </source>
</evidence>
<evidence type="ECO:0007744" key="9">
    <source>
        <dbReference type="PDB" id="6FMS"/>
    </source>
</evidence>
<evidence type="ECO:0007829" key="10">
    <source>
        <dbReference type="PDB" id="5DIR"/>
    </source>
</evidence>
<evidence type="ECO:0007829" key="11">
    <source>
        <dbReference type="PDB" id="6FMS"/>
    </source>
</evidence>
<proteinExistence type="evidence at protein level"/>
<accession>Q9HVM5</accession>
<name>LSPA_PSEAE</name>
<organism>
    <name type="scientific">Pseudomonas aeruginosa (strain ATCC 15692 / DSM 22644 / CIP 104116 / JCM 14847 / LMG 12228 / 1C / PRS 101 / PAO1)</name>
    <dbReference type="NCBI Taxonomy" id="208964"/>
    <lineage>
        <taxon>Bacteria</taxon>
        <taxon>Pseudomonadati</taxon>
        <taxon>Pseudomonadota</taxon>
        <taxon>Gammaproteobacteria</taxon>
        <taxon>Pseudomonadales</taxon>
        <taxon>Pseudomonadaceae</taxon>
        <taxon>Pseudomonas</taxon>
    </lineage>
</organism>
<dbReference type="EC" id="3.4.23.36" evidence="1 2 4"/>
<dbReference type="EMBL" id="AE004091">
    <property type="protein sequence ID" value="AAG07947.1"/>
    <property type="molecule type" value="Genomic_DNA"/>
</dbReference>
<dbReference type="PIR" id="A83077">
    <property type="entry name" value="A83077"/>
</dbReference>
<dbReference type="RefSeq" id="NP_253249.1">
    <property type="nucleotide sequence ID" value="NC_002516.2"/>
</dbReference>
<dbReference type="RefSeq" id="WP_003112823.1">
    <property type="nucleotide sequence ID" value="NZ_QZGE01000004.1"/>
</dbReference>
<dbReference type="PDB" id="5DIR">
    <property type="method" value="X-ray"/>
    <property type="resolution" value="2.80 A"/>
    <property type="chains" value="A/B/C/D=1-169"/>
</dbReference>
<dbReference type="PDB" id="6FMS">
    <property type="method" value="X-ray"/>
    <property type="resolution" value="3.00 A"/>
    <property type="chains" value="A/B/C/D=2-169"/>
</dbReference>
<dbReference type="PDBsum" id="5DIR"/>
<dbReference type="PDBsum" id="6FMS"/>
<dbReference type="SMR" id="Q9HVM5"/>
<dbReference type="FunCoup" id="Q9HVM5">
    <property type="interactions" value="442"/>
</dbReference>
<dbReference type="STRING" id="208964.PA4559"/>
<dbReference type="PaxDb" id="208964-PA4559"/>
<dbReference type="DNASU" id="877620"/>
<dbReference type="GeneID" id="877620"/>
<dbReference type="KEGG" id="pae:PA4559"/>
<dbReference type="PATRIC" id="fig|208964.12.peg.4771"/>
<dbReference type="PseudoCAP" id="PA4559"/>
<dbReference type="HOGENOM" id="CLU_083252_4_0_6"/>
<dbReference type="InParanoid" id="Q9HVM5"/>
<dbReference type="OrthoDB" id="9810259at2"/>
<dbReference type="PhylomeDB" id="Q9HVM5"/>
<dbReference type="BioCyc" id="PAER208964:G1FZ6-4652-MONOMER"/>
<dbReference type="UniPathway" id="UPA00665"/>
<dbReference type="Proteomes" id="UP000002438">
    <property type="component" value="Chromosome"/>
</dbReference>
<dbReference type="GO" id="GO:0005886">
    <property type="term" value="C:plasma membrane"/>
    <property type="evidence" value="ECO:0000250"/>
    <property type="project" value="PseudoCAP"/>
</dbReference>
<dbReference type="GO" id="GO:0004190">
    <property type="term" value="F:aspartic-type endopeptidase activity"/>
    <property type="evidence" value="ECO:0000250"/>
    <property type="project" value="PseudoCAP"/>
</dbReference>
<dbReference type="GO" id="GO:0004175">
    <property type="term" value="F:endopeptidase activity"/>
    <property type="evidence" value="ECO:0000318"/>
    <property type="project" value="GO_Central"/>
</dbReference>
<dbReference type="GO" id="GO:0006465">
    <property type="term" value="P:signal peptide processing"/>
    <property type="evidence" value="ECO:0000250"/>
    <property type="project" value="PseudoCAP"/>
</dbReference>
<dbReference type="HAMAP" id="MF_00161">
    <property type="entry name" value="LspA"/>
    <property type="match status" value="1"/>
</dbReference>
<dbReference type="InterPro" id="IPR001872">
    <property type="entry name" value="Peptidase_A8"/>
</dbReference>
<dbReference type="NCBIfam" id="TIGR00077">
    <property type="entry name" value="lspA"/>
    <property type="match status" value="1"/>
</dbReference>
<dbReference type="PANTHER" id="PTHR33695">
    <property type="entry name" value="LIPOPROTEIN SIGNAL PEPTIDASE"/>
    <property type="match status" value="1"/>
</dbReference>
<dbReference type="PANTHER" id="PTHR33695:SF1">
    <property type="entry name" value="LIPOPROTEIN SIGNAL PEPTIDASE"/>
    <property type="match status" value="1"/>
</dbReference>
<dbReference type="Pfam" id="PF01252">
    <property type="entry name" value="Peptidase_A8"/>
    <property type="match status" value="1"/>
</dbReference>
<dbReference type="PRINTS" id="PR00781">
    <property type="entry name" value="LIPOSIGPTASE"/>
</dbReference>
<dbReference type="PROSITE" id="PS00855">
    <property type="entry name" value="SPASE_II"/>
    <property type="match status" value="1"/>
</dbReference>
<comment type="function">
    <text evidence="1 2 4">This protein specifically catalyzes the removal of signal peptides from prolipoproteins.</text>
</comment>
<comment type="catalytic activity">
    <reaction evidence="1 2 4">
        <text>Release of signal peptides from bacterial membrane prolipoproteins. Hydrolyzes -Xaa-Yaa-Zaa-|-(S,diacylglyceryl)Cys-, in which Xaa is hydrophobic (preferably Leu), and Yaa (Ala or Ser) and Zaa (Gly or Ala) have small, neutral side chains.</text>
        <dbReference type="EC" id="3.4.23.36"/>
    </reaction>
</comment>
<comment type="activity regulation">
    <text evidence="2 4">Inhibited by globomycin.</text>
</comment>
<comment type="biophysicochemical properties">
    <kinetics>
        <KM evidence="4">10 uM for inhibitor of cysteine peptidase</KM>
        <Vmax evidence="4">107.0 nmol/min/mg enzyme with inhibitor of cysteine peptidase as substrate</Vmax>
    </kinetics>
</comment>
<comment type="pathway">
    <text evidence="1">Protein modification; lipoprotein biosynthesis (signal peptide cleavage).</text>
</comment>
<comment type="subunit">
    <text evidence="2">Monomer in the crystal.</text>
</comment>
<comment type="subcellular location">
    <subcellularLocation>
        <location evidence="1 2 3">Cell inner membrane</location>
        <topology evidence="1 2 3">Multi-pass membrane protein</topology>
    </subcellularLocation>
</comment>
<comment type="similarity">
    <text evidence="1">Belongs to the peptidase A8 family.</text>
</comment>
<feature type="chain" id="PRO_0000178802" description="Lipoprotein signal peptidase">
    <location>
        <begin position="1"/>
        <end position="169"/>
    </location>
</feature>
<feature type="topological domain" description="Cytoplasmic" evidence="2 3 8 9">
    <location>
        <begin position="1"/>
        <end position="9"/>
    </location>
</feature>
<feature type="transmembrane region" description="Helical" evidence="1 2 3 8 9">
    <location>
        <begin position="10"/>
        <end position="30"/>
    </location>
</feature>
<feature type="topological domain" description="Periplasmic" evidence="2 3 8 9">
    <location>
        <begin position="31"/>
        <end position="67"/>
    </location>
</feature>
<feature type="transmembrane region" description="Helical" evidence="2 3 8 9">
    <location>
        <begin position="68"/>
        <end position="89"/>
    </location>
</feature>
<feature type="topological domain" description="Cytoplasmic" evidence="2 3 8 9">
    <location>
        <begin position="90"/>
        <end position="96"/>
    </location>
</feature>
<feature type="transmembrane region" description="Helical" evidence="2 3 8 9">
    <location>
        <begin position="97"/>
        <end position="118"/>
    </location>
</feature>
<feature type="topological domain" description="Periplasmic" evidence="2 3 8 9">
    <location>
        <begin position="119"/>
        <end position="140"/>
    </location>
</feature>
<feature type="transmembrane region" description="Helical" evidence="2 8">
    <location>
        <begin position="141"/>
        <end position="154"/>
    </location>
</feature>
<feature type="topological domain" description="Cytoplasmic" evidence="2 8">
    <location>
        <begin position="155"/>
        <end position="169"/>
    </location>
</feature>
<feature type="active site" evidence="1 7">
    <location>
        <position position="124"/>
    </location>
</feature>
<feature type="active site" evidence="1 7">
    <location>
        <position position="143"/>
    </location>
</feature>
<feature type="mutagenesis site" description="Retains 20% of wild-type activity." evidence="2">
    <original>D</original>
    <variation>A</variation>
    <location>
        <position position="115"/>
    </location>
</feature>
<feature type="mutagenesis site" description="Retains 50% of wild-type activity." evidence="2">
    <original>D</original>
    <variation>N</variation>
    <location>
        <position position="115"/>
    </location>
</feature>
<feature type="mutagenesis site" description="Loss of activity." evidence="2">
    <original>R</original>
    <variation>A</variation>
    <location>
        <position position="116"/>
    </location>
</feature>
<feature type="mutagenesis site" description="Loss of activity." evidence="2">
    <original>D</original>
    <variation>N</variation>
    <location>
        <position position="124"/>
    </location>
</feature>
<feature type="mutagenesis site" description="Loss of activity." evidence="2">
    <original>D</original>
    <variation>N</variation>
    <location>
        <position position="143"/>
    </location>
</feature>
<feature type="turn" evidence="10">
    <location>
        <begin position="4"/>
        <end position="6"/>
    </location>
</feature>
<feature type="helix" evidence="10">
    <location>
        <begin position="10"/>
        <end position="12"/>
    </location>
</feature>
<feature type="helix" evidence="10">
    <location>
        <begin position="13"/>
        <end position="33"/>
    </location>
</feature>
<feature type="strand" evidence="10">
    <location>
        <begin position="40"/>
        <end position="43"/>
    </location>
</feature>
<feature type="turn" evidence="10">
    <location>
        <begin position="44"/>
        <end position="46"/>
    </location>
</feature>
<feature type="strand" evidence="10">
    <location>
        <begin position="47"/>
        <end position="54"/>
    </location>
</feature>
<feature type="helix" evidence="10">
    <location>
        <begin position="60"/>
        <end position="62"/>
    </location>
</feature>
<feature type="strand" evidence="11">
    <location>
        <begin position="63"/>
        <end position="67"/>
    </location>
</feature>
<feature type="helix" evidence="10">
    <location>
        <begin position="69"/>
        <end position="89"/>
    </location>
</feature>
<feature type="helix" evidence="10">
    <location>
        <begin position="96"/>
        <end position="118"/>
    </location>
</feature>
<feature type="strand" evidence="10">
    <location>
        <begin position="119"/>
        <end position="130"/>
    </location>
</feature>
<feature type="turn" evidence="10">
    <location>
        <begin position="131"/>
        <end position="133"/>
    </location>
</feature>
<feature type="helix" evidence="10">
    <location>
        <begin position="141"/>
        <end position="154"/>
    </location>
</feature>
<feature type="helix" evidence="10">
    <location>
        <begin position="155"/>
        <end position="157"/>
    </location>
</feature>
<gene>
    <name evidence="1 5" type="primary">lspA</name>
    <name type="synonym">ls</name>
    <name type="ordered locus">PA4559</name>
</gene>
<reference key="1">
    <citation type="journal article" date="2000" name="Nature">
        <title>Complete genome sequence of Pseudomonas aeruginosa PAO1, an opportunistic pathogen.</title>
        <authorList>
            <person name="Stover C.K."/>
            <person name="Pham X.-Q.T."/>
            <person name="Erwin A.L."/>
            <person name="Mizoguchi S.D."/>
            <person name="Warrener P."/>
            <person name="Hickey M.J."/>
            <person name="Brinkman F.S.L."/>
            <person name="Hufnagle W.O."/>
            <person name="Kowalik D.J."/>
            <person name="Lagrou M."/>
            <person name="Garber R.L."/>
            <person name="Goltry L."/>
            <person name="Tolentino E."/>
            <person name="Westbrock-Wadman S."/>
            <person name="Yuan Y."/>
            <person name="Brody L.L."/>
            <person name="Coulter S.N."/>
            <person name="Folger K.R."/>
            <person name="Kas A."/>
            <person name="Larbig K."/>
            <person name="Lim R.M."/>
            <person name="Smith K.A."/>
            <person name="Spencer D.H."/>
            <person name="Wong G.K.-S."/>
            <person name="Wu Z."/>
            <person name="Paulsen I.T."/>
            <person name="Reizer J."/>
            <person name="Saier M.H. Jr."/>
            <person name="Hancock R.E.W."/>
            <person name="Lory S."/>
            <person name="Olson M.V."/>
        </authorList>
    </citation>
    <scope>NUCLEOTIDE SEQUENCE [LARGE SCALE GENOMIC DNA]</scope>
    <source>
        <strain>ATCC 15692 / DSM 22644 / CIP 104116 / JCM 14847 / LMG 12228 / 1C / PRS 101 / PAO1</strain>
    </source>
</reference>
<reference key="2">
    <citation type="journal article" date="2020" name="Nat. Commun.">
        <title>Structures of lipoprotein signal peptidase II from Staphylococcus aureus complexed with antibiotics globomycin and myxovirescin.</title>
        <authorList>
            <person name="Olatunji S."/>
            <person name="Yu X."/>
            <person name="Bailey J."/>
            <person name="Huang C.Y."/>
            <person name="Zapotoczna M."/>
            <person name="Bowen K."/>
            <person name="Remskar M."/>
            <person name="Mueller R."/>
            <person name="Scanlan E.M."/>
            <person name="Geoghegan J.A."/>
            <person name="Olieric V."/>
            <person name="Caffrey M."/>
        </authorList>
    </citation>
    <scope>FUNCTION</scope>
    <scope>CATALYTIC ACTIVITY</scope>
    <scope>ACTIVITY REGULATION</scope>
    <scope>BIOPHYSICOCHEMICAL PROPERTIES</scope>
</reference>
<reference evidence="8" key="3">
    <citation type="journal article" date="2016" name="Science">
        <title>Structural basis of lipoprotein signal peptidase II action and inhibition by the antibiotic globomycin.</title>
        <authorList>
            <person name="Vogeley L."/>
            <person name="El Arnaout T."/>
            <person name="Bailey J."/>
            <person name="Stansfeld P.J."/>
            <person name="Boland C."/>
            <person name="Caffrey M."/>
        </authorList>
    </citation>
    <scope>X-RAY CRYSTALLOGRAPHY (2.80 ANGSTROMS)</scope>
    <scope>FUNCTION</scope>
    <scope>CATALYTIC ACTIVITY</scope>
    <scope>ACTIVITY REGULATION</scope>
    <scope>SUBUNIT</scope>
    <scope>SUBCELLULAR LOCATION</scope>
    <scope>TOPOLOGY</scope>
    <scope>MUTAGENESIS OF ASP-115; ARG-116; ASP-124 AND ASP-143</scope>
    <scope>ACTIVE SITES</scope>
    <source>
        <strain>ATCC 15692 / DSM 22644 / CIP 104116 / JCM 14847 / LMG 12228 / 1C / PRS 101 / PAO1</strain>
    </source>
</reference>
<reference evidence="9" key="4">
    <citation type="journal article" date="2018" name="Commun. Biol.">
        <title>In situ serial crystallography for rapid de novo membrane protein structure determination.</title>
        <authorList>
            <person name="Huang C.Y."/>
            <person name="Olieric V."/>
            <person name="Howe N."/>
            <person name="Warshamanage R."/>
            <person name="Weinert T."/>
            <person name="Panepucci E."/>
            <person name="Vogeley L."/>
            <person name="Basu S."/>
            <person name="Diederichs K."/>
            <person name="Caffrey M."/>
            <person name="Wang M."/>
        </authorList>
    </citation>
    <scope>X-RAY CRYSTALLOGRAPHY (3.00 ANGSTROMS) OF 2-169</scope>
    <scope>SUBCELLULAR LOCATION</scope>
    <scope>TOPOLOGY</scope>
</reference>
<keyword id="KW-0002">3D-structure</keyword>
<keyword id="KW-0064">Aspartyl protease</keyword>
<keyword id="KW-0997">Cell inner membrane</keyword>
<keyword id="KW-1003">Cell membrane</keyword>
<keyword id="KW-0378">Hydrolase</keyword>
<keyword id="KW-0472">Membrane</keyword>
<keyword id="KW-0645">Protease</keyword>
<keyword id="KW-1185">Reference proteome</keyword>
<keyword id="KW-0812">Transmembrane</keyword>
<keyword id="KW-1133">Transmembrane helix</keyword>
<protein>
    <recommendedName>
        <fullName evidence="1 5">Lipoprotein signal peptidase</fullName>
        <ecNumber evidence="1 2 4">3.4.23.36</ecNumber>
    </recommendedName>
    <alternativeName>
        <fullName evidence="6">LspPae</fullName>
    </alternativeName>
    <alternativeName>
        <fullName evidence="1">Prolipoprotein signal peptidase</fullName>
    </alternativeName>
    <alternativeName>
        <fullName evidence="1 5">Signal peptidase II</fullName>
        <shortName evidence="1">SPase II</shortName>
    </alternativeName>
</protein>